<name>ARTJ_ECOLI</name>
<sequence length="243" mass="26829">MKKLVLAALLASFTFGASAAEKINFGVSATYPPFESIGANNEIVGFDIDLAKALCKQMQAECTFTNHAFDSLIPSLKFRKYDAVISGMDITPERSKQVSFTTPYYENSAVVIAKKDTYKTFADLKGKRIGMENGTTHQKYIQDQHPEVKTVSYDSYQNAFIDLKNGRIDGVFGDTAVVNEWLKTNPQLGVATEKVTDPQYFGTGLGIAVRPDNKALLEKLNNALAAIKADGTYQKISDQWFPQ</sequence>
<organism>
    <name type="scientific">Escherichia coli (strain K12)</name>
    <dbReference type="NCBI Taxonomy" id="83333"/>
    <lineage>
        <taxon>Bacteria</taxon>
        <taxon>Pseudomonadati</taxon>
        <taxon>Pseudomonadota</taxon>
        <taxon>Gammaproteobacteria</taxon>
        <taxon>Enterobacterales</taxon>
        <taxon>Enterobacteriaceae</taxon>
        <taxon>Escherichia</taxon>
    </lineage>
</organism>
<feature type="signal peptide" evidence="1 2 3">
    <location>
        <begin position="1"/>
        <end position="19"/>
    </location>
</feature>
<feature type="chain" id="PRO_0000031752" description="ABC transporter arginine-binding protein 1">
    <location>
        <begin position="20"/>
        <end position="243"/>
    </location>
</feature>
<feature type="sequence conflict" description="In Ref. 1; CAA60105." evidence="4" ref="1">
    <original>R</original>
    <variation>C</variation>
    <location>
        <position position="128"/>
    </location>
</feature>
<dbReference type="EMBL" id="X86160">
    <property type="protein sequence ID" value="CAA60105.1"/>
    <property type="molecule type" value="Genomic_DNA"/>
</dbReference>
<dbReference type="EMBL" id="U00096">
    <property type="protein sequence ID" value="AAC73947.1"/>
    <property type="molecule type" value="Genomic_DNA"/>
</dbReference>
<dbReference type="EMBL" id="AP009048">
    <property type="protein sequence ID" value="BAA35574.1"/>
    <property type="molecule type" value="Genomic_DNA"/>
</dbReference>
<dbReference type="PIR" id="D64824">
    <property type="entry name" value="D64824"/>
</dbReference>
<dbReference type="RefSeq" id="NP_415381.1">
    <property type="nucleotide sequence ID" value="NC_000913.3"/>
</dbReference>
<dbReference type="RefSeq" id="WP_001295339.1">
    <property type="nucleotide sequence ID" value="NZ_LN832404.1"/>
</dbReference>
<dbReference type="SMR" id="P30860"/>
<dbReference type="BioGRID" id="4262914">
    <property type="interactions" value="19"/>
</dbReference>
<dbReference type="ComplexPortal" id="CPX-4319">
    <property type="entry name" value="Arginine ABC transporter complex, artJ variant"/>
</dbReference>
<dbReference type="FunCoup" id="P30860">
    <property type="interactions" value="215"/>
</dbReference>
<dbReference type="IntAct" id="P30860">
    <property type="interactions" value="1"/>
</dbReference>
<dbReference type="STRING" id="511145.b0860"/>
<dbReference type="TCDB" id="3.A.1.3.3">
    <property type="family name" value="the atp-binding cassette (abc) superfamily"/>
</dbReference>
<dbReference type="jPOST" id="P30860"/>
<dbReference type="PaxDb" id="511145-b0860"/>
<dbReference type="EnsemblBacteria" id="AAC73947">
    <property type="protein sequence ID" value="AAC73947"/>
    <property type="gene ID" value="b0860"/>
</dbReference>
<dbReference type="GeneID" id="948981"/>
<dbReference type="KEGG" id="ecj:JW0844"/>
<dbReference type="KEGG" id="eco:b0860"/>
<dbReference type="KEGG" id="ecoc:C3026_05360"/>
<dbReference type="PATRIC" id="fig|1411691.4.peg.1417"/>
<dbReference type="EchoBASE" id="EB1585"/>
<dbReference type="eggNOG" id="COG0834">
    <property type="taxonomic scope" value="Bacteria"/>
</dbReference>
<dbReference type="HOGENOM" id="CLU_019602_18_0_6"/>
<dbReference type="InParanoid" id="P30860"/>
<dbReference type="OMA" id="DIAMSAM"/>
<dbReference type="OrthoDB" id="9768183at2"/>
<dbReference type="PhylomeDB" id="P30860"/>
<dbReference type="BioCyc" id="EcoCyc:ARTJ-MONOMER"/>
<dbReference type="BioCyc" id="MetaCyc:ARTJ-MONOMER"/>
<dbReference type="PRO" id="PR:P30860"/>
<dbReference type="Proteomes" id="UP000000625">
    <property type="component" value="Chromosome"/>
</dbReference>
<dbReference type="GO" id="GO:0055052">
    <property type="term" value="C:ATP-binding cassette (ABC) transporter complex, substrate-binding subunit-containing"/>
    <property type="evidence" value="ECO:0000303"/>
    <property type="project" value="ComplexPortal"/>
</dbReference>
<dbReference type="GO" id="GO:0016020">
    <property type="term" value="C:membrane"/>
    <property type="evidence" value="ECO:0000303"/>
    <property type="project" value="ComplexPortal"/>
</dbReference>
<dbReference type="GO" id="GO:0030288">
    <property type="term" value="C:outer membrane-bounded periplasmic space"/>
    <property type="evidence" value="ECO:0000314"/>
    <property type="project" value="EcoCyc"/>
</dbReference>
<dbReference type="GO" id="GO:0042597">
    <property type="term" value="C:periplasmic space"/>
    <property type="evidence" value="ECO:0000314"/>
    <property type="project" value="EcoliWiki"/>
</dbReference>
<dbReference type="GO" id="GO:0016597">
    <property type="term" value="F:amino acid binding"/>
    <property type="evidence" value="ECO:0000314"/>
    <property type="project" value="EcoliWiki"/>
</dbReference>
<dbReference type="GO" id="GO:0034618">
    <property type="term" value="F:arginine binding"/>
    <property type="evidence" value="ECO:0000314"/>
    <property type="project" value="EcoCyc"/>
</dbReference>
<dbReference type="GO" id="GO:0015276">
    <property type="term" value="F:ligand-gated monoatomic ion channel activity"/>
    <property type="evidence" value="ECO:0007669"/>
    <property type="project" value="InterPro"/>
</dbReference>
<dbReference type="GO" id="GO:0097638">
    <property type="term" value="P:L-arginine import across plasma membrane"/>
    <property type="evidence" value="ECO:0000315"/>
    <property type="project" value="EcoCyc"/>
</dbReference>
<dbReference type="GO" id="GO:1903826">
    <property type="term" value="P:L-arginine transmembrane transport"/>
    <property type="evidence" value="ECO:0000315"/>
    <property type="project" value="EcoliWiki"/>
</dbReference>
<dbReference type="CDD" id="cd13700">
    <property type="entry name" value="PBP2_Arg_STM4351"/>
    <property type="match status" value="1"/>
</dbReference>
<dbReference type="FunFam" id="3.40.190.10:FF:000014">
    <property type="entry name" value="Arginine ABC transporter substrate-binding protein"/>
    <property type="match status" value="1"/>
</dbReference>
<dbReference type="Gene3D" id="3.40.190.10">
    <property type="entry name" value="Periplasmic binding protein-like II"/>
    <property type="match status" value="2"/>
</dbReference>
<dbReference type="InterPro" id="IPR053530">
    <property type="entry name" value="ABC_transporter_arg-binding"/>
</dbReference>
<dbReference type="InterPro" id="IPR001320">
    <property type="entry name" value="Iontro_rcpt_C"/>
</dbReference>
<dbReference type="InterPro" id="IPR005768">
    <property type="entry name" value="Lys_Arg_Orn-bd"/>
</dbReference>
<dbReference type="InterPro" id="IPR018313">
    <property type="entry name" value="SBP_3_CS"/>
</dbReference>
<dbReference type="InterPro" id="IPR001638">
    <property type="entry name" value="Solute-binding_3/MltF_N"/>
</dbReference>
<dbReference type="NCBIfam" id="TIGR01096">
    <property type="entry name" value="3A0103s03R"/>
    <property type="match status" value="1"/>
</dbReference>
<dbReference type="NCBIfam" id="NF041765">
    <property type="entry name" value="ArtJ_Ecoli"/>
    <property type="match status" value="1"/>
</dbReference>
<dbReference type="NCBIfam" id="NF011583">
    <property type="entry name" value="PRK15007.1"/>
    <property type="match status" value="1"/>
</dbReference>
<dbReference type="PANTHER" id="PTHR35936:SF36">
    <property type="entry name" value="ABC TRANSPORTER ARGININE-BINDING PROTEIN 1"/>
    <property type="match status" value="1"/>
</dbReference>
<dbReference type="PANTHER" id="PTHR35936">
    <property type="entry name" value="MEMBRANE-BOUND LYTIC MUREIN TRANSGLYCOSYLASE F"/>
    <property type="match status" value="1"/>
</dbReference>
<dbReference type="Pfam" id="PF00497">
    <property type="entry name" value="SBP_bac_3"/>
    <property type="match status" value="1"/>
</dbReference>
<dbReference type="SMART" id="SM00062">
    <property type="entry name" value="PBPb"/>
    <property type="match status" value="1"/>
</dbReference>
<dbReference type="SMART" id="SM00079">
    <property type="entry name" value="PBPe"/>
    <property type="match status" value="1"/>
</dbReference>
<dbReference type="SUPFAM" id="SSF53850">
    <property type="entry name" value="Periplasmic binding protein-like II"/>
    <property type="match status" value="1"/>
</dbReference>
<dbReference type="PROSITE" id="PS01039">
    <property type="entry name" value="SBP_BACTERIAL_3"/>
    <property type="match status" value="1"/>
</dbReference>
<protein>
    <recommendedName>
        <fullName>ABC transporter arginine-binding protein 1</fullName>
    </recommendedName>
</protein>
<comment type="function">
    <text evidence="1">Part of the ABC transporter complex ArtPIQMJ involved in arginine transport. Binds L-arginine with high affinity.</text>
</comment>
<comment type="subunit">
    <text evidence="5">The complex is composed of two ATP-binding proteins (ArtP), two transmembrane proteins (ArtM and ArtQ) and two solute-binding proteins (ArtJ and ArtI).</text>
</comment>
<comment type="subcellular location">
    <subcellularLocation>
        <location evidence="1">Periplasm</location>
    </subcellularLocation>
</comment>
<comment type="similarity">
    <text evidence="4">Belongs to the bacterial solute-binding protein 3 family.</text>
</comment>
<gene>
    <name type="primary">artJ</name>
    <name type="ordered locus">b0860</name>
    <name type="ordered locus">JW0844</name>
</gene>
<evidence type="ECO:0000269" key="1">
    <source>
    </source>
</evidence>
<evidence type="ECO:0000269" key="2">
    <source>
    </source>
</evidence>
<evidence type="ECO:0000269" key="3">
    <source>
    </source>
</evidence>
<evidence type="ECO:0000305" key="4"/>
<evidence type="ECO:0000305" key="5">
    <source>
    </source>
</evidence>
<keyword id="KW-0029">Amino-acid transport</keyword>
<keyword id="KW-0903">Direct protein sequencing</keyword>
<keyword id="KW-0574">Periplasm</keyword>
<keyword id="KW-1185">Reference proteome</keyword>
<keyword id="KW-0732">Signal</keyword>
<keyword id="KW-0813">Transport</keyword>
<accession>P30860</accession>
<accession>P77547</accession>
<reference key="1">
    <citation type="journal article" date="1993" name="J. Bacteriol.">
        <title>Physical map location of the new artPIQMJ genes of Escherichia coli, encoding a periplasmic arginine transport system.</title>
        <authorList>
            <person name="Wissenbach U."/>
            <person name="Unden G."/>
        </authorList>
    </citation>
    <scope>NUCLEOTIDE SEQUENCE [GENOMIC DNA]</scope>
    <source>
        <strain>K12 / AN387</strain>
    </source>
</reference>
<reference key="2">
    <citation type="journal article" date="1996" name="DNA Res.">
        <title>A 718-kb DNA sequence of the Escherichia coli K-12 genome corresponding to the 12.7-28.0 min region on the linkage map.</title>
        <authorList>
            <person name="Oshima T."/>
            <person name="Aiba H."/>
            <person name="Baba T."/>
            <person name="Fujita K."/>
            <person name="Hayashi K."/>
            <person name="Honjo A."/>
            <person name="Ikemoto K."/>
            <person name="Inada T."/>
            <person name="Itoh T."/>
            <person name="Kajihara M."/>
            <person name="Kanai K."/>
            <person name="Kashimoto K."/>
            <person name="Kimura S."/>
            <person name="Kitagawa M."/>
            <person name="Makino K."/>
            <person name="Masuda S."/>
            <person name="Miki T."/>
            <person name="Mizobuchi K."/>
            <person name="Mori H."/>
            <person name="Motomura K."/>
            <person name="Nakamura Y."/>
            <person name="Nashimoto H."/>
            <person name="Nishio Y."/>
            <person name="Saito N."/>
            <person name="Sampei G."/>
            <person name="Seki Y."/>
            <person name="Tagami H."/>
            <person name="Takemoto K."/>
            <person name="Wada C."/>
            <person name="Yamamoto Y."/>
            <person name="Yano M."/>
            <person name="Horiuchi T."/>
        </authorList>
    </citation>
    <scope>NUCLEOTIDE SEQUENCE [LARGE SCALE GENOMIC DNA]</scope>
    <source>
        <strain>K12 / W3110 / ATCC 27325 / DSM 5911</strain>
    </source>
</reference>
<reference key="3">
    <citation type="journal article" date="1997" name="Science">
        <title>The complete genome sequence of Escherichia coli K-12.</title>
        <authorList>
            <person name="Blattner F.R."/>
            <person name="Plunkett G. III"/>
            <person name="Bloch C.A."/>
            <person name="Perna N.T."/>
            <person name="Burland V."/>
            <person name="Riley M."/>
            <person name="Collado-Vides J."/>
            <person name="Glasner J.D."/>
            <person name="Rode C.K."/>
            <person name="Mayhew G.F."/>
            <person name="Gregor J."/>
            <person name="Davis N.W."/>
            <person name="Kirkpatrick H.A."/>
            <person name="Goeden M.A."/>
            <person name="Rose D.J."/>
            <person name="Mau B."/>
            <person name="Shao Y."/>
        </authorList>
    </citation>
    <scope>NUCLEOTIDE SEQUENCE [LARGE SCALE GENOMIC DNA]</scope>
    <source>
        <strain>K12 / MG1655 / ATCC 47076</strain>
    </source>
</reference>
<reference key="4">
    <citation type="journal article" date="2006" name="Mol. Syst. Biol.">
        <title>Highly accurate genome sequences of Escherichia coli K-12 strains MG1655 and W3110.</title>
        <authorList>
            <person name="Hayashi K."/>
            <person name="Morooka N."/>
            <person name="Yamamoto Y."/>
            <person name="Fujita K."/>
            <person name="Isono K."/>
            <person name="Choi S."/>
            <person name="Ohtsubo E."/>
            <person name="Baba T."/>
            <person name="Wanner B.L."/>
            <person name="Mori H."/>
            <person name="Horiuchi T."/>
        </authorList>
    </citation>
    <scope>NUCLEOTIDE SEQUENCE [LARGE SCALE GENOMIC DNA]</scope>
    <source>
        <strain>K12 / W3110 / ATCC 27325 / DSM 5911</strain>
    </source>
</reference>
<reference key="5">
    <citation type="journal article" date="1995" name="Mol. Microbiol.">
        <title>A third periplasmic transport system for L-arginine in Escherichia coli: molecular characterization of the artPIQMJ genes, arginine binding and transport.</title>
        <authorList>
            <person name="Wissenbach U."/>
            <person name="Six S."/>
            <person name="Bongaerts J."/>
            <person name="Ternes D."/>
            <person name="Steinwachs S."/>
            <person name="Unden G."/>
        </authorList>
    </citation>
    <scope>PROTEIN SEQUENCE OF 20-39</scope>
    <scope>FUNCTION</scope>
    <scope>SUBUNIT</scope>
    <scope>SUBCELLULAR LOCATION</scope>
</reference>
<reference key="6">
    <citation type="journal article" date="1997" name="Electrophoresis">
        <title>Comparing the predicted and observed properties of proteins encoded in the genome of Escherichia coli K-12.</title>
        <authorList>
            <person name="Link A.J."/>
            <person name="Robison K."/>
            <person name="Church G.M."/>
        </authorList>
    </citation>
    <scope>PROTEIN SEQUENCE OF 20-31</scope>
    <source>
        <strain>K12 / EMG2</strain>
    </source>
</reference>
<reference key="7">
    <citation type="journal article" date="1998" name="J. Mol. Biol.">
        <title>Protein identification with N and C-terminal sequence tags in proteome projects.</title>
        <authorList>
            <person name="Wilkins M.R."/>
            <person name="Gasteiger E."/>
            <person name="Tonella L."/>
            <person name="Ou K."/>
            <person name="Tyler M."/>
            <person name="Sanchez J.-C."/>
            <person name="Gooley A.A."/>
            <person name="Walsh B.J."/>
            <person name="Bairoch A."/>
            <person name="Appel R.D."/>
            <person name="Williams K.L."/>
            <person name="Hochstrasser D.F."/>
        </authorList>
    </citation>
    <scope>PROTEIN SEQUENCE OF 20-23</scope>
    <source>
        <strain>K12 / W3110 / ATCC 27325 / DSM 5911</strain>
    </source>
</reference>
<proteinExistence type="evidence at protein level"/>